<evidence type="ECO:0000250" key="1"/>
<evidence type="ECO:0000305" key="2"/>
<reference key="1">
    <citation type="journal article" date="1998" name="Science">
        <title>Genome sequence of the nematode C. elegans: a platform for investigating biology.</title>
        <authorList>
            <consortium name="The C. elegans sequencing consortium"/>
        </authorList>
    </citation>
    <scope>NUCLEOTIDE SEQUENCE [LARGE SCALE GENOMIC DNA]</scope>
    <source>
        <strain>Bristol N2</strain>
    </source>
</reference>
<organism>
    <name type="scientific">Caenorhabditis elegans</name>
    <dbReference type="NCBI Taxonomy" id="6239"/>
    <lineage>
        <taxon>Eukaryota</taxon>
        <taxon>Metazoa</taxon>
        <taxon>Ecdysozoa</taxon>
        <taxon>Nematoda</taxon>
        <taxon>Chromadorea</taxon>
        <taxon>Rhabditida</taxon>
        <taxon>Rhabditina</taxon>
        <taxon>Rhabditomorpha</taxon>
        <taxon>Rhabditoidea</taxon>
        <taxon>Rhabditidae</taxon>
        <taxon>Peloderinae</taxon>
        <taxon>Caenorhabditis</taxon>
    </lineage>
</organism>
<protein>
    <recommendedName>
        <fullName>Putative cytochrome P450 CYP13A7</fullName>
        <ecNumber>1.14.-.-</ecNumber>
    </recommendedName>
</protein>
<feature type="chain" id="PRO_0000052267" description="Putative cytochrome P450 CYP13A7">
    <location>
        <begin position="1"/>
        <end position="518"/>
    </location>
</feature>
<feature type="binding site" description="axial binding residue" evidence="1">
    <location>
        <position position="464"/>
    </location>
    <ligand>
        <name>heme</name>
        <dbReference type="ChEBI" id="CHEBI:30413"/>
    </ligand>
    <ligandPart>
        <name>Fe</name>
        <dbReference type="ChEBI" id="CHEBI:18248"/>
    </ligandPart>
</feature>
<name>C13A7_CAEEL</name>
<gene>
    <name type="primary">cyp-13A7</name>
    <name type="synonym">cyp13a7</name>
    <name type="ORF">T10B9.10</name>
</gene>
<dbReference type="EC" id="1.14.-.-"/>
<dbReference type="EMBL" id="Z48717">
    <property type="protein sequence ID" value="CAA88609.1"/>
    <property type="molecule type" value="Genomic_DNA"/>
</dbReference>
<dbReference type="PIR" id="T24783">
    <property type="entry name" value="T24783"/>
</dbReference>
<dbReference type="RefSeq" id="NP_496114.1">
    <property type="nucleotide sequence ID" value="NM_063713.4"/>
</dbReference>
<dbReference type="SMR" id="Q27519"/>
<dbReference type="BioGRID" id="53029">
    <property type="interactions" value="1"/>
</dbReference>
<dbReference type="DIP" id="DIP-27079N"/>
<dbReference type="FunCoup" id="Q27519">
    <property type="interactions" value="118"/>
</dbReference>
<dbReference type="STRING" id="6239.T10B9.10.1"/>
<dbReference type="PaxDb" id="6239-T10B9.10"/>
<dbReference type="PeptideAtlas" id="Q27519"/>
<dbReference type="EnsemblMetazoa" id="T10B9.10.1">
    <property type="protein sequence ID" value="T10B9.10.1"/>
    <property type="gene ID" value="WBGene00000372"/>
</dbReference>
<dbReference type="GeneID" id="188362"/>
<dbReference type="KEGG" id="cel:CELE_T10B9.10"/>
<dbReference type="UCSC" id="T10B9.10">
    <property type="organism name" value="c. elegans"/>
</dbReference>
<dbReference type="AGR" id="WB:WBGene00000372"/>
<dbReference type="CTD" id="188362"/>
<dbReference type="WormBase" id="T10B9.10">
    <property type="protein sequence ID" value="CE01655"/>
    <property type="gene ID" value="WBGene00000372"/>
    <property type="gene designation" value="cyp-13A7"/>
</dbReference>
<dbReference type="eggNOG" id="KOG0158">
    <property type="taxonomic scope" value="Eukaryota"/>
</dbReference>
<dbReference type="GeneTree" id="ENSGT00970000195979"/>
<dbReference type="HOGENOM" id="CLU_001570_5_2_1"/>
<dbReference type="InParanoid" id="Q27519"/>
<dbReference type="OMA" id="QQEVWEI"/>
<dbReference type="OrthoDB" id="2789670at2759"/>
<dbReference type="PhylomeDB" id="Q27519"/>
<dbReference type="PRO" id="PR:Q27519"/>
<dbReference type="Proteomes" id="UP000001940">
    <property type="component" value="Chromosome II"/>
</dbReference>
<dbReference type="Bgee" id="WBGene00000372">
    <property type="expression patterns" value="Expressed in material anatomical entity and 1 other cell type or tissue"/>
</dbReference>
<dbReference type="GO" id="GO:0020037">
    <property type="term" value="F:heme binding"/>
    <property type="evidence" value="ECO:0007669"/>
    <property type="project" value="InterPro"/>
</dbReference>
<dbReference type="GO" id="GO:0005506">
    <property type="term" value="F:iron ion binding"/>
    <property type="evidence" value="ECO:0007669"/>
    <property type="project" value="InterPro"/>
</dbReference>
<dbReference type="GO" id="GO:0004497">
    <property type="term" value="F:monooxygenase activity"/>
    <property type="evidence" value="ECO:0007669"/>
    <property type="project" value="UniProtKB-KW"/>
</dbReference>
<dbReference type="GO" id="GO:0016705">
    <property type="term" value="F:oxidoreductase activity, acting on paired donors, with incorporation or reduction of molecular oxygen"/>
    <property type="evidence" value="ECO:0007669"/>
    <property type="project" value="InterPro"/>
</dbReference>
<dbReference type="CDD" id="cd11055">
    <property type="entry name" value="CYP3A-like"/>
    <property type="match status" value="1"/>
</dbReference>
<dbReference type="FunFam" id="1.10.630.10:FF:000182">
    <property type="entry name" value="Cytochrome P450 3A4"/>
    <property type="match status" value="1"/>
</dbReference>
<dbReference type="Gene3D" id="1.10.630.10">
    <property type="entry name" value="Cytochrome P450"/>
    <property type="match status" value="1"/>
</dbReference>
<dbReference type="InterPro" id="IPR001128">
    <property type="entry name" value="Cyt_P450"/>
</dbReference>
<dbReference type="InterPro" id="IPR017972">
    <property type="entry name" value="Cyt_P450_CS"/>
</dbReference>
<dbReference type="InterPro" id="IPR002401">
    <property type="entry name" value="Cyt_P450_E_grp-I"/>
</dbReference>
<dbReference type="InterPro" id="IPR036396">
    <property type="entry name" value="Cyt_P450_sf"/>
</dbReference>
<dbReference type="InterPro" id="IPR050705">
    <property type="entry name" value="Cytochrome_P450_3A"/>
</dbReference>
<dbReference type="PANTHER" id="PTHR24302">
    <property type="entry name" value="CYTOCHROME P450 FAMILY 3"/>
    <property type="match status" value="1"/>
</dbReference>
<dbReference type="PANTHER" id="PTHR24302:SF15">
    <property type="entry name" value="FATTY-ACID PEROXYGENASE"/>
    <property type="match status" value="1"/>
</dbReference>
<dbReference type="Pfam" id="PF00067">
    <property type="entry name" value="p450"/>
    <property type="match status" value="1"/>
</dbReference>
<dbReference type="PRINTS" id="PR00463">
    <property type="entry name" value="EP450I"/>
</dbReference>
<dbReference type="PRINTS" id="PR00385">
    <property type="entry name" value="P450"/>
</dbReference>
<dbReference type="SUPFAM" id="SSF48264">
    <property type="entry name" value="Cytochrome P450"/>
    <property type="match status" value="1"/>
</dbReference>
<dbReference type="PROSITE" id="PS00086">
    <property type="entry name" value="CYTOCHROME_P450"/>
    <property type="match status" value="1"/>
</dbReference>
<keyword id="KW-0349">Heme</keyword>
<keyword id="KW-0408">Iron</keyword>
<keyword id="KW-0479">Metal-binding</keyword>
<keyword id="KW-0503">Monooxygenase</keyword>
<keyword id="KW-0560">Oxidoreductase</keyword>
<keyword id="KW-1185">Reference proteome</keyword>
<proteinExistence type="inferred from homology"/>
<sequence>MSFSILIAIAIFVGIISYYLWIWSFWIRKGVKGPRGLPFLGVIHKFTNYENPGALKFSEWTKKYGPVYGITEGVEKTLVISDPEFVHEVFVKQFDNFYGRKLTAIQGDPNKNKRVPLVAAQGHRWKRLRTLASPTFSNKSLRKIMGTVEESVTELVRSLEKASAEGKTLDMLEYYQEFTMDIIGKMAMGQEKSLMFRNPMLDKVKTIFKEGRNNVFMISGIFPFVGIALRNIFAKFPSLQMATDIQSILEKALNKRLEQREADEKAGIEPSGEPQDFIDLFLDARSTVDFFEGEAEQDFAKSEVLKVDKHLTFDEIIGQLFVFLLAGYDTTALSLSYSSYLLATHPEIQKKLQEEVDRECPDPEVTFDQLSKLKYLECVVKEALRLYPLASLVHNRKCLKTTNVLGMEIEAGTNINVDTWSLHHDPKVWGDDVNEFKPERWESGDELFFAKGGYLPFGMGPRICIGMRLAMMEMKMLLTNILKNYTFETTPETVIPLKLVGTATIAPSSVLLKLKSRF</sequence>
<accession>Q27519</accession>
<comment type="function">
    <text>Cytochromes P450 are a group of heme-thiolate monooxygenases. They oxidize a variety of structurally unrelated compounds, including steroids, fatty acids, and xenobiotics.</text>
</comment>
<comment type="cofactor">
    <cofactor evidence="1">
        <name>heme</name>
        <dbReference type="ChEBI" id="CHEBI:30413"/>
    </cofactor>
</comment>
<comment type="similarity">
    <text evidence="2">Belongs to the cytochrome P450 family.</text>
</comment>